<comment type="function">
    <text>Core component of nucleosome. Nucleosomes wrap and compact DNA into chromatin, limiting DNA accessibility to the cellular machineries which require DNA as a template. Histones thereby play a central role in transcription regulation, DNA repair, DNA replication and chromosomal stability. DNA accessibility is regulated via a complex set of post-translational modifications of histones, also called histone code, and nucleosome remodeling.</text>
</comment>
<comment type="subunit">
    <text>The nucleosome is a histone octamer containing two molecules each of H2A, H2B, H3 and H4 assembled in one H3-H4 heterotetramer and two H2A-H2B heterodimers. The octamer wraps approximately 147 bp of DNA.</text>
</comment>
<comment type="subcellular location">
    <subcellularLocation>
        <location>Nucleus</location>
    </subcellularLocation>
    <subcellularLocation>
        <location>Chromosome</location>
    </subcellularLocation>
</comment>
<comment type="PTM">
    <text evidence="3">Monoubiquitination at Lys-35 (H2BK34Ub) by the MSL1/MSL2 dimer is required for histone H3 'Lys-4' (H3K4me) and 'Lys-79' (H3K79me) methylation and transcription activation at specific gene loci, such as HOXA9 and MEIS1 loci. Similarly, monoubiquitination at Lys-121 (H2BK120Ub) by the RNF20/40 complex gives a specific tag for epigenetic transcriptional activation and is also prerequisite for histone H3 'Lys-4' and 'Lys-79' methylation. It also functions cooperatively with the FACT dimer to stimulate elongation by RNA polymerase II. H2BK120Ub also acts as a regulator of mRNA splicing: deubiquitination by USP49 is required for efficient cotranscriptional splicing of a large set of exons (By similarity).</text>
</comment>
<comment type="PTM">
    <text evidence="3 8">Phosphorylated on Ser-15 (H2BS14ph) by STK4/MST1 during apoptosis; which facilitates apoptotic chromatin condensation. Also phosphorylated on Ser-15 in response to DNA double strand breaks (DSBs), and in correlation with somatic hypermutation and immunoglobulin class-switch recombination. Phosphorylation at Ser-37 (H2BS36ph) by AMPK in response to stress promotes transcription (By similarity).</text>
</comment>
<comment type="PTM">
    <text evidence="5">GlcNAcylation at Ser-113 promotes monoubiquitination of Lys-121. It fluctuates in response to extracellular glucose, and associates with transcribed genes (By similarity).</text>
</comment>
<comment type="PTM">
    <text evidence="3 9">ADP-ribosylated by PARP1 or PARP2 on Ser-7 (H2BS6ADPr) in response to DNA damage (By similarity). H2BS6ADPr promotes recruitment of CHD1L (By similarity). Mono-ADP-ribosylated on Glu-3 (H2BE2ADPr) by PARP3 in response to single-strand breaks (By similarity). Poly ADP-ribosylation on Glu-36 (H2BE35ADPr) by PARP1 regulates adipogenesis: it inhibits phosphorylation at Ser-37 (H2BS36ph), thereby blocking expression of pro-adipogenetic genes (By similarity).</text>
</comment>
<comment type="PTM">
    <text evidence="3">Crotonylation (Kcr) is specifically present in male germ cells and marks testis-specific genes in post-meiotic cells, including X-linked genes that escape sex chromosome inactivation in haploid cells. Crotonylation marks active promoters and enhancers and confers resistance to transcriptional repressors. It is also associated with post-meiotically activated genes on autosomes (By similarity).</text>
</comment>
<comment type="PTM">
    <text evidence="3">Lactylated in macrophages by EP300/P300 by using lactoyl-CoA directly derived from endogenous or exogenous lactate, leading to stimulates gene transcription.</text>
</comment>
<comment type="similarity">
    <text evidence="14">Belongs to the histone H2B family.</text>
</comment>
<name>H2B1K_BOVIN</name>
<proteinExistence type="evidence at protein level"/>
<feature type="initiator methionine" description="Removed" evidence="2 13">
    <location>
        <position position="1"/>
    </location>
</feature>
<feature type="chain" id="PRO_0000244821" description="Histone H2B type 1-K">
    <location>
        <begin position="2"/>
        <end position="126"/>
    </location>
</feature>
<feature type="region of interest" description="Disordered" evidence="12">
    <location>
        <begin position="1"/>
        <end position="36"/>
    </location>
</feature>
<feature type="compositionally biased region" description="Low complexity" evidence="12">
    <location>
        <begin position="1"/>
        <end position="12"/>
    </location>
</feature>
<feature type="modified residue" description="N-acetylproline" evidence="2">
    <location>
        <position position="2"/>
    </location>
</feature>
<feature type="modified residue" description="ADP-ribosyl glutamic acid" evidence="3">
    <location>
        <position position="3"/>
    </location>
</feature>
<feature type="modified residue" description="N6-(2-hydroxyisobutyryl)lysine; alternate" evidence="3">
    <location>
        <position position="6"/>
    </location>
</feature>
<feature type="modified residue" description="N6-(beta-hydroxybutyryl)lysine; alternate" evidence="8">
    <location>
        <position position="6"/>
    </location>
</feature>
<feature type="modified residue" description="N6-acetyllysine; alternate" evidence="1">
    <location>
        <position position="6"/>
    </location>
</feature>
<feature type="modified residue" description="N6-butyryllysine; alternate" evidence="3">
    <location>
        <position position="6"/>
    </location>
</feature>
<feature type="modified residue" description="N6-crotonyllysine; alternate" evidence="3">
    <location>
        <position position="6"/>
    </location>
</feature>
<feature type="modified residue" description="N6-lactoyllysine; alternate" evidence="3">
    <location>
        <position position="6"/>
    </location>
</feature>
<feature type="modified residue" description="ADP-ribosylserine" evidence="3">
    <location>
        <position position="7"/>
    </location>
</feature>
<feature type="modified residue" description="N6-(beta-hydroxybutyryl)lysine; alternate" evidence="8">
    <location>
        <position position="12"/>
    </location>
</feature>
<feature type="modified residue" description="N6-acetyllysine; alternate" evidence="1">
    <location>
        <position position="12"/>
    </location>
</feature>
<feature type="modified residue" description="N6-crotonyllysine; alternate" evidence="3">
    <location>
        <position position="12"/>
    </location>
</feature>
<feature type="modified residue" description="N6-lactoyllysine; alternate" evidence="3">
    <location>
        <position position="12"/>
    </location>
</feature>
<feature type="modified residue" description="N6-(2-hydroxyisobutyryl)lysine; alternate" evidence="3">
    <location>
        <position position="13"/>
    </location>
</feature>
<feature type="modified residue" description="N6-acetyllysine; alternate" evidence="1">
    <location>
        <position position="13"/>
    </location>
</feature>
<feature type="modified residue" description="N6-crotonyllysine; alternate" evidence="3">
    <location>
        <position position="13"/>
    </location>
</feature>
<feature type="modified residue" description="Phosphoserine; by STK4/MST1" evidence="1">
    <location>
        <position position="15"/>
    </location>
</feature>
<feature type="modified residue" description="N6-acetyllysine; alternate" evidence="1">
    <location>
        <position position="16"/>
    </location>
</feature>
<feature type="modified residue" description="N6-crotonyllysine; alternate" evidence="3">
    <location>
        <position position="16"/>
    </location>
</feature>
<feature type="modified residue" description="N6-lactoyllysine; alternate" evidence="3">
    <location>
        <position position="16"/>
    </location>
</feature>
<feature type="modified residue" description="N6-acetyllysine; alternate" evidence="1">
    <location>
        <position position="17"/>
    </location>
</feature>
<feature type="modified residue" description="N6-crotonyllysine; alternate" evidence="3">
    <location>
        <position position="17"/>
    </location>
</feature>
<feature type="modified residue" description="N6-glutaryllysine; alternate" evidence="3">
    <location>
        <position position="17"/>
    </location>
</feature>
<feature type="modified residue" description="N6-lactoyllysine; alternate" evidence="3">
    <location>
        <position position="17"/>
    </location>
</feature>
<feature type="modified residue" description="N6-(2-hydroxyisobutyryl)lysine; alternate" evidence="3">
    <location>
        <position position="21"/>
    </location>
</feature>
<feature type="modified residue" description="N6-(beta-hydroxybutyryl)lysine; alternate" evidence="8">
    <location>
        <position position="21"/>
    </location>
</feature>
<feature type="modified residue" description="N6-acetyllysine; alternate" evidence="1">
    <location>
        <position position="21"/>
    </location>
</feature>
<feature type="modified residue" description="N6-butyryllysine; alternate" evidence="3">
    <location>
        <position position="21"/>
    </location>
</feature>
<feature type="modified residue" description="N6-crotonyllysine; alternate" evidence="3">
    <location>
        <position position="21"/>
    </location>
</feature>
<feature type="modified residue" description="N6-lactoyllysine; alternate" evidence="3">
    <location>
        <position position="21"/>
    </location>
</feature>
<feature type="modified residue" description="N6-(2-hydroxyisobutyryl)lysine; alternate" evidence="3">
    <location>
        <position position="24"/>
    </location>
</feature>
<feature type="modified residue" description="N6-acetyllysine; alternate" evidence="3">
    <location>
        <position position="24"/>
    </location>
</feature>
<feature type="modified residue" description="N6-crotonyllysine; alternate" evidence="3">
    <location>
        <position position="24"/>
    </location>
</feature>
<feature type="modified residue" description="N6-lactoyllysine; alternate" evidence="3">
    <location>
        <position position="24"/>
    </location>
</feature>
<feature type="modified residue" description="N6-(2-hydroxyisobutyryl)lysine; alternate" evidence="3">
    <location>
        <position position="35"/>
    </location>
</feature>
<feature type="modified residue" description="N6-(beta-hydroxybutyryl)lysine; alternate" evidence="8">
    <location>
        <position position="35"/>
    </location>
</feature>
<feature type="modified residue" description="N6-crotonyllysine; alternate" evidence="3">
    <location>
        <position position="35"/>
    </location>
</feature>
<feature type="modified residue" description="N6-glutaryllysine; alternate" evidence="3">
    <location>
        <position position="35"/>
    </location>
</feature>
<feature type="modified residue" description="N6-succinyllysine; alternate" evidence="1">
    <location>
        <position position="35"/>
    </location>
</feature>
<feature type="modified residue" description="PolyADP-ribosyl glutamic acid" evidence="8">
    <location>
        <position position="36"/>
    </location>
</feature>
<feature type="modified residue" description="Phosphoserine; by AMPK" evidence="10">
    <location>
        <position position="37"/>
    </location>
</feature>
<feature type="modified residue" description="N6-(2-hydroxyisobutyryl)lysine; alternate" evidence="3">
    <location>
        <position position="44"/>
    </location>
</feature>
<feature type="modified residue" description="N6-glutaryllysine; alternate" evidence="3">
    <location>
        <position position="44"/>
    </location>
</feature>
<feature type="modified residue" description="N6-lactoyllysine; alternate" evidence="3">
    <location>
        <position position="44"/>
    </location>
</feature>
<feature type="modified residue" description="N6-(2-hydroxyisobutyryl)lysine; alternate" evidence="3">
    <location>
        <position position="47"/>
    </location>
</feature>
<feature type="modified residue" description="N6-glutaryllysine; alternate" evidence="3">
    <location>
        <position position="47"/>
    </location>
</feature>
<feature type="modified residue" description="N6-methyllysine; alternate" evidence="1">
    <location>
        <position position="47"/>
    </location>
</feature>
<feature type="modified residue" description="N6,N6-dimethyllysine; alternate" evidence="1">
    <location>
        <position position="58"/>
    </location>
</feature>
<feature type="modified residue" description="N6-(2-hydroxyisobutyryl)lysine; alternate" evidence="3">
    <location>
        <position position="58"/>
    </location>
</feature>
<feature type="modified residue" description="Dimethylated arginine" evidence="11">
    <location>
        <position position="80"/>
    </location>
</feature>
<feature type="modified residue" description="N6,N6,N6-trimethyllysine; alternate" evidence="11">
    <location>
        <position position="86"/>
    </location>
</feature>
<feature type="modified residue" description="N6-(2-hydroxyisobutyryl)lysine; alternate" evidence="3">
    <location>
        <position position="86"/>
    </location>
</feature>
<feature type="modified residue" description="N6-acetyllysine; alternate" evidence="11">
    <location>
        <position position="86"/>
    </location>
</feature>
<feature type="modified residue" description="N6-lactoyllysine; alternate" evidence="3">
    <location>
        <position position="86"/>
    </location>
</feature>
<feature type="modified residue" description="Omega-N-methylarginine" evidence="11">
    <location>
        <position position="87"/>
    </location>
</feature>
<feature type="modified residue" description="Omega-N-methylarginine" evidence="11">
    <location>
        <position position="93"/>
    </location>
</feature>
<feature type="modified residue" description="N6-(2-hydroxyisobutyryl)lysine; alternate" evidence="3">
    <location>
        <position position="109"/>
    </location>
</feature>
<feature type="modified residue" description="N6-glutaryllysine; alternate" evidence="3">
    <location>
        <position position="109"/>
    </location>
</feature>
<feature type="modified residue" description="N6-lactoyllysine; alternate" evidence="3">
    <location>
        <position position="109"/>
    </location>
</feature>
<feature type="modified residue" description="N6-methyllysine; alternate" evidence="1">
    <location>
        <position position="109"/>
    </location>
</feature>
<feature type="modified residue" description="Phosphothreonine" evidence="6">
    <location>
        <position position="116"/>
    </location>
</feature>
<feature type="modified residue" description="N6-(2-hydroxyisobutyryl)lysine; alternate" evidence="3">
    <location>
        <position position="117"/>
    </location>
</feature>
<feature type="modified residue" description="N6-(beta-hydroxybutyryl)lysine; alternate" evidence="8">
    <location>
        <position position="117"/>
    </location>
</feature>
<feature type="modified residue" description="N6-glutaryllysine; alternate" evidence="3">
    <location>
        <position position="117"/>
    </location>
</feature>
<feature type="modified residue" description="N6-lactoyllysine; alternate" evidence="3">
    <location>
        <position position="117"/>
    </location>
</feature>
<feature type="modified residue" description="N6-methylated lysine; alternate" evidence="6">
    <location>
        <position position="117"/>
    </location>
</feature>
<feature type="modified residue" description="N6-succinyllysine; alternate" evidence="1">
    <location>
        <position position="117"/>
    </location>
</feature>
<feature type="modified residue" description="N6-(2-hydroxyisobutyryl)lysine; alternate" evidence="3">
    <location>
        <position position="121"/>
    </location>
</feature>
<feature type="modified residue" description="N6-glutaryllysine; alternate" evidence="3">
    <location>
        <position position="121"/>
    </location>
</feature>
<feature type="modified residue" description="N6-lactoyllysine; alternate" evidence="3">
    <location>
        <position position="121"/>
    </location>
</feature>
<feature type="modified residue" description="N6-succinyllysine; alternate" evidence="1">
    <location>
        <position position="121"/>
    </location>
</feature>
<feature type="glycosylation site" description="O-linked (GlcNAc) serine" evidence="5">
    <location>
        <position position="113"/>
    </location>
</feature>
<feature type="cross-link" description="Glycyl lysine isopeptide (Lys-Gly) (interchain with G-Cter in SUMO2); alternate" evidence="4">
    <location>
        <position position="6"/>
    </location>
</feature>
<feature type="cross-link" description="Glycyl lysine isopeptide (Lys-Gly) (interchain with G-Cter in SUMO2); alternate" evidence="7">
    <location>
        <position position="21"/>
    </location>
</feature>
<feature type="cross-link" description="Glycyl lysine isopeptide (Lys-Gly) (interchain with G-Cter in ubiquitin); alternate" evidence="1">
    <location>
        <position position="35"/>
    </location>
</feature>
<feature type="cross-link" description="Glycyl lysine isopeptide (Lys-Gly) (interchain with G-Cter in ubiquitin); alternate" evidence="15">
    <location>
        <position position="121"/>
    </location>
</feature>
<feature type="helix" evidence="16">
    <location>
        <begin position="39"/>
        <end position="49"/>
    </location>
</feature>
<feature type="strand" evidence="16">
    <location>
        <begin position="50"/>
        <end position="52"/>
    </location>
</feature>
<feature type="helix" evidence="16">
    <location>
        <begin position="57"/>
        <end position="84"/>
    </location>
</feature>
<feature type="strand" evidence="16">
    <location>
        <begin position="88"/>
        <end position="90"/>
    </location>
</feature>
<feature type="helix" evidence="16">
    <location>
        <begin position="92"/>
        <end position="102"/>
    </location>
</feature>
<feature type="helix" evidence="16">
    <location>
        <begin position="106"/>
        <end position="124"/>
    </location>
</feature>
<sequence length="126" mass="13875">MPEPAKSAPAPKKGSKKAVTKAQKIDGKKRKRSRKESYSVYVYKVLKQVHPDTGISSKAMGIMNSFVNDIFERIAGEASRLAHYNKRSTITSREIQTAVRLLLPGELAKHAVSEGTKAVTKYTSAK</sequence>
<protein>
    <recommendedName>
        <fullName>Histone H2B type 1-K</fullName>
    </recommendedName>
</protein>
<dbReference type="EMBL" id="BC111653">
    <property type="protein sequence ID" value="AAI11654.1"/>
    <property type="molecule type" value="mRNA"/>
</dbReference>
<dbReference type="RefSeq" id="NP_001071531.1">
    <property type="nucleotide sequence ID" value="NM_001078063.2"/>
</dbReference>
<dbReference type="PDB" id="7XD0">
    <property type="method" value="EM"/>
    <property type="resolution" value="3.48 A"/>
    <property type="chains" value="D/H=34-125"/>
</dbReference>
<dbReference type="PDB" id="7YQK">
    <property type="method" value="EM"/>
    <property type="resolution" value="3.38 A"/>
    <property type="chains" value="D/H=30-125"/>
</dbReference>
<dbReference type="PDBsum" id="7XD0"/>
<dbReference type="PDBsum" id="7YQK"/>
<dbReference type="EMDB" id="EMD-33131"/>
<dbReference type="EMDB" id="EMD-34028"/>
<dbReference type="SMR" id="Q2M2T1"/>
<dbReference type="BioGRID" id="544226">
    <property type="interactions" value="3"/>
</dbReference>
<dbReference type="FunCoup" id="Q2M2T1">
    <property type="interactions" value="274"/>
</dbReference>
<dbReference type="STRING" id="9913.ENSBTAP00000052749"/>
<dbReference type="GlyCosmos" id="Q2M2T1">
    <property type="glycosylation" value="1 site, No reported glycans"/>
</dbReference>
<dbReference type="GlyGen" id="Q2M2T1">
    <property type="glycosylation" value="1 site"/>
</dbReference>
<dbReference type="iPTMnet" id="Q2M2T1"/>
<dbReference type="PaxDb" id="9913-ENSBTAP00000052749"/>
<dbReference type="GeneID" id="616627"/>
<dbReference type="KEGG" id="bta:616627"/>
<dbReference type="CTD" id="85236"/>
<dbReference type="eggNOG" id="KOG1744">
    <property type="taxonomic scope" value="Eukaryota"/>
</dbReference>
<dbReference type="InParanoid" id="Q2M2T1"/>
<dbReference type="OrthoDB" id="9802428at2759"/>
<dbReference type="Proteomes" id="UP000009136">
    <property type="component" value="Unplaced"/>
</dbReference>
<dbReference type="GO" id="GO:0000786">
    <property type="term" value="C:nucleosome"/>
    <property type="evidence" value="ECO:0007669"/>
    <property type="project" value="UniProtKB-KW"/>
</dbReference>
<dbReference type="GO" id="GO:0005634">
    <property type="term" value="C:nucleus"/>
    <property type="evidence" value="ECO:0007669"/>
    <property type="project" value="UniProtKB-SubCell"/>
</dbReference>
<dbReference type="GO" id="GO:0003677">
    <property type="term" value="F:DNA binding"/>
    <property type="evidence" value="ECO:0007669"/>
    <property type="project" value="UniProtKB-KW"/>
</dbReference>
<dbReference type="GO" id="GO:0046982">
    <property type="term" value="F:protein heterodimerization activity"/>
    <property type="evidence" value="ECO:0007669"/>
    <property type="project" value="InterPro"/>
</dbReference>
<dbReference type="GO" id="GO:0030527">
    <property type="term" value="F:structural constituent of chromatin"/>
    <property type="evidence" value="ECO:0007669"/>
    <property type="project" value="InterPro"/>
</dbReference>
<dbReference type="CDD" id="cd22910">
    <property type="entry name" value="HFD_H2B"/>
    <property type="match status" value="1"/>
</dbReference>
<dbReference type="FunFam" id="1.10.20.10:FF:000003">
    <property type="entry name" value="Histone H2B"/>
    <property type="match status" value="1"/>
</dbReference>
<dbReference type="Gene3D" id="1.10.20.10">
    <property type="entry name" value="Histone, subunit A"/>
    <property type="match status" value="1"/>
</dbReference>
<dbReference type="InterPro" id="IPR009072">
    <property type="entry name" value="Histone-fold"/>
</dbReference>
<dbReference type="InterPro" id="IPR007125">
    <property type="entry name" value="Histone_H2A/H2B/H3"/>
</dbReference>
<dbReference type="InterPro" id="IPR000558">
    <property type="entry name" value="Histone_H2B"/>
</dbReference>
<dbReference type="InterPro" id="IPR055333">
    <property type="entry name" value="HISTONE_H2B_site"/>
</dbReference>
<dbReference type="PANTHER" id="PTHR23428">
    <property type="entry name" value="HISTONE H2B"/>
    <property type="match status" value="1"/>
</dbReference>
<dbReference type="Pfam" id="PF00125">
    <property type="entry name" value="Histone"/>
    <property type="match status" value="1"/>
</dbReference>
<dbReference type="PRINTS" id="PR00621">
    <property type="entry name" value="HISTONEH2B"/>
</dbReference>
<dbReference type="SMART" id="SM00427">
    <property type="entry name" value="H2B"/>
    <property type="match status" value="1"/>
</dbReference>
<dbReference type="SUPFAM" id="SSF47113">
    <property type="entry name" value="Histone-fold"/>
    <property type="match status" value="1"/>
</dbReference>
<dbReference type="PROSITE" id="PS00357">
    <property type="entry name" value="HISTONE_H2B"/>
    <property type="match status" value="1"/>
</dbReference>
<evidence type="ECO:0000250" key="1">
    <source>
        <dbReference type="UniProtKB" id="O60814"/>
    </source>
</evidence>
<evidence type="ECO:0000250" key="2">
    <source>
        <dbReference type="UniProtKB" id="P23527"/>
    </source>
</evidence>
<evidence type="ECO:0000250" key="3">
    <source>
        <dbReference type="UniProtKB" id="P33778"/>
    </source>
</evidence>
<evidence type="ECO:0000250" key="4">
    <source>
        <dbReference type="UniProtKB" id="P58876"/>
    </source>
</evidence>
<evidence type="ECO:0000250" key="5">
    <source>
        <dbReference type="UniProtKB" id="P62807"/>
    </source>
</evidence>
<evidence type="ECO:0000250" key="6">
    <source>
        <dbReference type="UniProtKB" id="Q00729"/>
    </source>
</evidence>
<evidence type="ECO:0000250" key="7">
    <source>
        <dbReference type="UniProtKB" id="Q5QNW6"/>
    </source>
</evidence>
<evidence type="ECO:0000250" key="8">
    <source>
        <dbReference type="UniProtKB" id="Q64475"/>
    </source>
</evidence>
<evidence type="ECO:0000250" key="9">
    <source>
        <dbReference type="UniProtKB" id="Q6ZWY9"/>
    </source>
</evidence>
<evidence type="ECO:0000250" key="10">
    <source>
        <dbReference type="UniProtKB" id="Q8CGP1"/>
    </source>
</evidence>
<evidence type="ECO:0000250" key="11">
    <source>
        <dbReference type="UniProtKB" id="Q96A08"/>
    </source>
</evidence>
<evidence type="ECO:0000256" key="12">
    <source>
        <dbReference type="SAM" id="MobiDB-lite"/>
    </source>
</evidence>
<evidence type="ECO:0000269" key="13">
    <source>
    </source>
</evidence>
<evidence type="ECO:0000305" key="14"/>
<evidence type="ECO:0000305" key="15">
    <source>
    </source>
</evidence>
<evidence type="ECO:0007829" key="16">
    <source>
        <dbReference type="PDB" id="7XD0"/>
    </source>
</evidence>
<accession>Q2M2T1</accession>
<organism>
    <name type="scientific">Bos taurus</name>
    <name type="common">Bovine</name>
    <dbReference type="NCBI Taxonomy" id="9913"/>
    <lineage>
        <taxon>Eukaryota</taxon>
        <taxon>Metazoa</taxon>
        <taxon>Chordata</taxon>
        <taxon>Craniata</taxon>
        <taxon>Vertebrata</taxon>
        <taxon>Euteleostomi</taxon>
        <taxon>Mammalia</taxon>
        <taxon>Eutheria</taxon>
        <taxon>Laurasiatheria</taxon>
        <taxon>Artiodactyla</taxon>
        <taxon>Ruminantia</taxon>
        <taxon>Pecora</taxon>
        <taxon>Bovidae</taxon>
        <taxon>Bovinae</taxon>
        <taxon>Bos</taxon>
    </lineage>
</organism>
<reference key="1">
    <citation type="submission" date="2006-01" db="EMBL/GenBank/DDBJ databases">
        <authorList>
            <consortium name="NIH - Mammalian Gene Collection (MGC) project"/>
        </authorList>
    </citation>
    <scope>NUCLEOTIDE SEQUENCE [LARGE SCALE MRNA]</scope>
    <source>
        <strain>Hereford</strain>
        <tissue>Testis</tissue>
    </source>
</reference>
<reference key="2">
    <citation type="journal article" date="2003" name="J. Biol. Chem.">
        <title>Somatic histones are components of the perinuclear theca in bovine spermatozoa.</title>
        <authorList>
            <person name="Tovich P.R."/>
            <person name="Oko R.J."/>
        </authorList>
    </citation>
    <scope>PROTEIN SEQUENCE OF 2-20</scope>
</reference>
<reference key="3">
    <citation type="journal article" date="1989" name="Biochemistry">
        <title>Ubiquitinated histone H2B is preferentially located in transcriptionally active chromatin.</title>
        <authorList>
            <person name="Nickel B.E."/>
            <person name="Allis C.D."/>
            <person name="Davie J.R."/>
        </authorList>
    </citation>
    <scope>UBIQUITINATION</scope>
</reference>
<gene>
    <name evidence="1" type="primary">H2BC12</name>
</gene>
<keyword id="KW-0002">3D-structure</keyword>
<keyword id="KW-0007">Acetylation</keyword>
<keyword id="KW-0013">ADP-ribosylation</keyword>
<keyword id="KW-0158">Chromosome</keyword>
<keyword id="KW-0903">Direct protein sequencing</keyword>
<keyword id="KW-0238">DNA-binding</keyword>
<keyword id="KW-0325">Glycoprotein</keyword>
<keyword id="KW-0379">Hydroxylation</keyword>
<keyword id="KW-1017">Isopeptide bond</keyword>
<keyword id="KW-0488">Methylation</keyword>
<keyword id="KW-0544">Nucleosome core</keyword>
<keyword id="KW-0539">Nucleus</keyword>
<keyword id="KW-0597">Phosphoprotein</keyword>
<keyword id="KW-1185">Reference proteome</keyword>
<keyword id="KW-0832">Ubl conjugation</keyword>